<keyword id="KW-0274">FAD</keyword>
<keyword id="KW-0285">Flavoprotein</keyword>
<keyword id="KW-0325">Glycoprotein</keyword>
<keyword id="KW-0503">Monooxygenase</keyword>
<keyword id="KW-0560">Oxidoreductase</keyword>
<keyword id="KW-1185">Reference proteome</keyword>
<keyword id="KW-0732">Signal</keyword>
<name>NSCC_ARTOC</name>
<comment type="function">
    <text evidence="1 3 8 9">FAD-dependent monooxygenase; part of the gene cluster that mediates the biosynthesis of neosartoricin B, a prenylated anthracenone that probably exhibits T-cell antiproliferative activity, suggestive of a physiological role as an immunosuppressive agent (PubMed:23368997, PubMed:23758576). The non-reducing polyketide synthase nscA probably synthesizes and cyclizes the decaketide backbone (By similarity). The hydrolase nscB then mediates the product release through hydrolysis followed by spontaneous decarboxylation (By similarity). The prenyltransferase nscD catalyzes the addition of the dimethylallyl group to the aromatic C5 (By similarity). The FAD-dependent monooxygenase nscC is then responsible for the stereospecific hydroxylation at C2 (By similarity). Neosartoricin B can be converted into two additional compounds neosartoricins C and D (By similarity). Neosartoricin C is a spirocyclic compound that is cyclized through the attack of C3 hydroxyl on C14, followed by dehydration (By similarity). On the other hand, neosartoricin D is a further cyclized compound in which attack of C2 on C14 in neosartoricin C results in the formation of the acetal-containing dioxabicyclo-octanone ring (By similarity). Both of these compounds are novel and possibly represent related metabolites of the gene cluster (By similarity).</text>
</comment>
<comment type="cofactor">
    <cofactor evidence="7">
        <name>FAD</name>
        <dbReference type="ChEBI" id="CHEBI:57692"/>
    </cofactor>
</comment>
<comment type="pathway">
    <text evidence="9">Secondary metabolite biosynthesis.</text>
</comment>
<comment type="similarity">
    <text evidence="7">Belongs to the paxM FAD-dependent monooxygenase family.</text>
</comment>
<reference key="1">
    <citation type="journal article" date="2012" name="MBio">
        <title>Comparative genome analysis of Trichophyton rubrum and related dermatophytes reveals candidate genes involved in infection.</title>
        <authorList>
            <person name="Martinez D.A."/>
            <person name="Oliver B.G."/>
            <person name="Graeser Y."/>
            <person name="Goldberg J.M."/>
            <person name="Li W."/>
            <person name="Martinez-Rossi N.M."/>
            <person name="Monod M."/>
            <person name="Shelest E."/>
            <person name="Barton R.C."/>
            <person name="Birch E."/>
            <person name="Brakhage A.A."/>
            <person name="Chen Z."/>
            <person name="Gurr S.J."/>
            <person name="Heiman D."/>
            <person name="Heitman J."/>
            <person name="Kosti I."/>
            <person name="Rossi A."/>
            <person name="Saif S."/>
            <person name="Samalova M."/>
            <person name="Saunders C.W."/>
            <person name="Shea T."/>
            <person name="Summerbell R.C."/>
            <person name="Xu J."/>
            <person name="Young S."/>
            <person name="Zeng Q."/>
            <person name="Birren B.W."/>
            <person name="Cuomo C.A."/>
            <person name="White T.C."/>
        </authorList>
    </citation>
    <scope>NUCLEOTIDE SEQUENCE [LARGE SCALE GENOMIC DNA]</scope>
    <source>
        <strain>ATCC MYA-4605 / CBS 113480</strain>
    </source>
</reference>
<reference key="2">
    <citation type="journal article" date="2013" name="ACS Synth. Biol.">
        <title>Discovery of cryptic polyketide metabolites from dermatophytes using heterologous expression in Aspergillus nidulans.</title>
        <authorList>
            <person name="Yin W.B."/>
            <person name="Chooi Y.H."/>
            <person name="Smith A.R."/>
            <person name="Cacho R.A."/>
            <person name="Hu Y."/>
            <person name="White T.C."/>
            <person name="Tang Y."/>
        </authorList>
    </citation>
    <scope>FUNCTION</scope>
</reference>
<reference key="3">
    <citation type="journal article" date="2013" name="Org. Lett.">
        <title>Genome mining of a prenylated and immunosuppressive polyketide from pathogenic fungi.</title>
        <authorList>
            <person name="Chooi Y.H."/>
            <person name="Fang J."/>
            <person name="Liu H."/>
            <person name="Filler S.G."/>
            <person name="Wang P."/>
            <person name="Tang Y."/>
        </authorList>
    </citation>
    <scope>FUNCTION</scope>
</reference>
<organism>
    <name type="scientific">Arthroderma otae (strain ATCC MYA-4605 / CBS 113480)</name>
    <name type="common">Microsporum canis</name>
    <dbReference type="NCBI Taxonomy" id="554155"/>
    <lineage>
        <taxon>Eukaryota</taxon>
        <taxon>Fungi</taxon>
        <taxon>Dikarya</taxon>
        <taxon>Ascomycota</taxon>
        <taxon>Pezizomycotina</taxon>
        <taxon>Eurotiomycetes</taxon>
        <taxon>Eurotiomycetidae</taxon>
        <taxon>Onygenales</taxon>
        <taxon>Arthrodermataceae</taxon>
        <taxon>Microsporum</taxon>
    </lineage>
</organism>
<gene>
    <name evidence="6" type="primary">nscC</name>
    <name type="ORF">MCYG_03600</name>
</gene>
<accession>C5FM59</accession>
<feature type="signal peptide" evidence="4">
    <location>
        <begin position="1"/>
        <end position="21"/>
    </location>
</feature>
<feature type="chain" id="PRO_0000437907" description="FAD-dependent monooxygenase nscC">
    <location>
        <begin position="22"/>
        <end position="412"/>
    </location>
</feature>
<feature type="binding site" evidence="2">
    <location>
        <position position="35"/>
    </location>
    <ligand>
        <name>FAD</name>
        <dbReference type="ChEBI" id="CHEBI:57692"/>
    </ligand>
</feature>
<feature type="binding site" evidence="2">
    <location>
        <position position="46"/>
    </location>
    <ligand>
        <name>FAD</name>
        <dbReference type="ChEBI" id="CHEBI:57692"/>
    </ligand>
</feature>
<feature type="binding site" evidence="2">
    <location>
        <position position="119"/>
    </location>
    <ligand>
        <name>FAD</name>
        <dbReference type="ChEBI" id="CHEBI:57692"/>
    </ligand>
</feature>
<feature type="binding site" evidence="2">
    <location>
        <position position="326"/>
    </location>
    <ligand>
        <name>FAD</name>
        <dbReference type="ChEBI" id="CHEBI:57692"/>
    </ligand>
</feature>
<feature type="binding site" evidence="2">
    <location>
        <position position="339"/>
    </location>
    <ligand>
        <name>FAD</name>
        <dbReference type="ChEBI" id="CHEBI:57692"/>
    </ligand>
</feature>
<feature type="glycosylation site" description="N-linked (GlcNAc...) asparagine" evidence="5">
    <location>
        <position position="92"/>
    </location>
</feature>
<feature type="glycosylation site" description="N-linked (GlcNAc...) asparagine" evidence="5">
    <location>
        <position position="170"/>
    </location>
</feature>
<feature type="glycosylation site" description="N-linked (GlcNAc...) asparagine" evidence="5">
    <location>
        <position position="231"/>
    </location>
</feature>
<protein>
    <recommendedName>
        <fullName evidence="6">FAD-dependent monooxygenase nscC</fullName>
        <ecNumber evidence="9">1.-.-.-</ecNumber>
    </recommendedName>
    <alternativeName>
        <fullName evidence="6">Neosartoricin B biosynthesis protein C</fullName>
    </alternativeName>
</protein>
<evidence type="ECO:0000250" key="1">
    <source>
        <dbReference type="UniProtKB" id="A1D8J0"/>
    </source>
</evidence>
<evidence type="ECO:0000250" key="2">
    <source>
        <dbReference type="UniProtKB" id="B8M9J8"/>
    </source>
</evidence>
<evidence type="ECO:0000250" key="3">
    <source>
        <dbReference type="UniProtKB" id="F2S701"/>
    </source>
</evidence>
<evidence type="ECO:0000255" key="4"/>
<evidence type="ECO:0000255" key="5">
    <source>
        <dbReference type="PROSITE-ProRule" id="PRU00498"/>
    </source>
</evidence>
<evidence type="ECO:0000303" key="6">
    <source>
    </source>
</evidence>
<evidence type="ECO:0000305" key="7"/>
<evidence type="ECO:0000305" key="8">
    <source>
    </source>
</evidence>
<evidence type="ECO:0000305" key="9">
    <source>
    </source>
</evidence>
<sequence>MAKPQATVLIIGAGISGLTTSRLLTNSGIPNIVFEASTPDRSQGFAISLQEFGYSALLSALGDLPLSSLIRGVAPDREIGGTGWIDQALRDNCTGELLVAPDLTTAKQTVVRANRNALRRWIADCGEEELDVRYGHKLQSVEGTVGDITAVFENKARYRGSLVVAADGVNSTIRSQVLPGVVPETIPLIHYHGEFQLSRTAFDELIRPHSGHSNILVGVGDGFNTPLSICNMTKTQVHLDWSYSRTVTGDDDLLYRPNLPSEEAKQIPPALVKELAALALAEPWKRFLNPESLKSHRVFHWTTRCVYMTQDDARRAGEQGVVFVGDSWHAMPIFGGEGGNHALLDGVELADAVVKVVASPGKDHLSKAVASYYAGAWKRSQEAVRRSTQRFFLLHRPAAEWKEIAEKKKKAV</sequence>
<dbReference type="EC" id="1.-.-.-" evidence="9"/>
<dbReference type="EMBL" id="DS995703">
    <property type="protein sequence ID" value="EEQ30781.1"/>
    <property type="molecule type" value="Genomic_DNA"/>
</dbReference>
<dbReference type="RefSeq" id="XP_002848094.1">
    <property type="nucleotide sequence ID" value="XM_002848048.1"/>
</dbReference>
<dbReference type="SMR" id="C5FM59"/>
<dbReference type="STRING" id="554155.C5FM59"/>
<dbReference type="GlyCosmos" id="C5FM59">
    <property type="glycosylation" value="3 sites, No reported glycans"/>
</dbReference>
<dbReference type="GeneID" id="9229416"/>
<dbReference type="VEuPathDB" id="FungiDB:MCYG_03600"/>
<dbReference type="eggNOG" id="ENOG502SIVG">
    <property type="taxonomic scope" value="Eukaryota"/>
</dbReference>
<dbReference type="HOGENOM" id="CLU_040697_0_0_1"/>
<dbReference type="OMA" id="IPLIHYH"/>
<dbReference type="OrthoDB" id="47494at2759"/>
<dbReference type="Proteomes" id="UP000002035">
    <property type="component" value="Unassembled WGS sequence"/>
</dbReference>
<dbReference type="GO" id="GO:0071949">
    <property type="term" value="F:FAD binding"/>
    <property type="evidence" value="ECO:0007669"/>
    <property type="project" value="InterPro"/>
</dbReference>
<dbReference type="GO" id="GO:0004497">
    <property type="term" value="F:monooxygenase activity"/>
    <property type="evidence" value="ECO:0007669"/>
    <property type="project" value="UniProtKB-KW"/>
</dbReference>
<dbReference type="Gene3D" id="3.50.50.60">
    <property type="entry name" value="FAD/NAD(P)-binding domain"/>
    <property type="match status" value="1"/>
</dbReference>
<dbReference type="InterPro" id="IPR002938">
    <property type="entry name" value="FAD-bd"/>
</dbReference>
<dbReference type="InterPro" id="IPR036188">
    <property type="entry name" value="FAD/NAD-bd_sf"/>
</dbReference>
<dbReference type="PANTHER" id="PTHR47178:SF4">
    <property type="entry name" value="FAD-DEPENDENT MONOOXYGENASE APTC"/>
    <property type="match status" value="1"/>
</dbReference>
<dbReference type="PANTHER" id="PTHR47178">
    <property type="entry name" value="MONOOXYGENASE, FAD-BINDING"/>
    <property type="match status" value="1"/>
</dbReference>
<dbReference type="Pfam" id="PF01494">
    <property type="entry name" value="FAD_binding_3"/>
    <property type="match status" value="1"/>
</dbReference>
<dbReference type="PRINTS" id="PR00420">
    <property type="entry name" value="RNGMNOXGNASE"/>
</dbReference>
<dbReference type="SUPFAM" id="SSF51905">
    <property type="entry name" value="FAD/NAD(P)-binding domain"/>
    <property type="match status" value="1"/>
</dbReference>
<proteinExistence type="inferred from homology"/>